<protein>
    <recommendedName>
        <fullName evidence="2">Formamidopyrimidine-DNA glycosylase</fullName>
        <shortName evidence="2">Fapy-DNA glycosylase</shortName>
        <ecNumber evidence="2">3.2.2.23</ecNumber>
    </recommendedName>
    <alternativeName>
        <fullName evidence="2">DNA-(apurinic or apyrimidinic site) lyase MutM</fullName>
        <shortName evidence="2">AP lyase MutM</shortName>
        <ecNumber evidence="2">4.2.99.18</ecNumber>
    </alternativeName>
</protein>
<sequence length="283" mass="31350">MPELPEVETVRRGLTPAMEGVVIARADVNRPDLRWPFPADMAARLTGKRVERLRRRSKYILMDLDSGETLLVHLGMSGRMLVSGDPLGQFVHSHPAPEKHDHVVFHMANNARITFNDPRRFGAMDLMETASADTHKLLSVLGPEPLGNDFHESHLIEAFKNRNSPVKSVLLDQRIVSGLGNIYVCEALFRAKIHPIRKAGKISGARVATLVPIIREVLAEAIEAGGSSLRDFKQADGELGYFQHSFDVYGREGAPCKGEGCTGQIKRIVQSGRSSFYCAQCQR</sequence>
<accession>Q16DL0</accession>
<gene>
    <name evidence="2" type="primary">mutM</name>
    <name evidence="2" type="synonym">fpg</name>
    <name type="ordered locus">RD1_0204</name>
</gene>
<proteinExistence type="inferred from homology"/>
<name>FPG_ROSDO</name>
<comment type="function">
    <text evidence="2">Involved in base excision repair of DNA damaged by oxidation or by mutagenic agents. Acts as a DNA glycosylase that recognizes and removes damaged bases. Has a preference for oxidized purines, such as 7,8-dihydro-8-oxoguanine (8-oxoG). Has AP (apurinic/apyrimidinic) lyase activity and introduces nicks in the DNA strand. Cleaves the DNA backbone by beta-delta elimination to generate a single-strand break at the site of the removed base with both 3'- and 5'-phosphates.</text>
</comment>
<comment type="catalytic activity">
    <reaction evidence="2">
        <text>Hydrolysis of DNA containing ring-opened 7-methylguanine residues, releasing 2,6-diamino-4-hydroxy-5-(N-methyl)formamidopyrimidine.</text>
        <dbReference type="EC" id="3.2.2.23"/>
    </reaction>
</comment>
<comment type="catalytic activity">
    <reaction evidence="2">
        <text>2'-deoxyribonucleotide-(2'-deoxyribose 5'-phosphate)-2'-deoxyribonucleotide-DNA = a 3'-end 2'-deoxyribonucleotide-(2,3-dehydro-2,3-deoxyribose 5'-phosphate)-DNA + a 5'-end 5'-phospho-2'-deoxyribonucleoside-DNA + H(+)</text>
        <dbReference type="Rhea" id="RHEA:66592"/>
        <dbReference type="Rhea" id="RHEA-COMP:13180"/>
        <dbReference type="Rhea" id="RHEA-COMP:16897"/>
        <dbReference type="Rhea" id="RHEA-COMP:17067"/>
        <dbReference type="ChEBI" id="CHEBI:15378"/>
        <dbReference type="ChEBI" id="CHEBI:136412"/>
        <dbReference type="ChEBI" id="CHEBI:157695"/>
        <dbReference type="ChEBI" id="CHEBI:167181"/>
        <dbReference type="EC" id="4.2.99.18"/>
    </reaction>
</comment>
<comment type="cofactor">
    <cofactor evidence="2">
        <name>Zn(2+)</name>
        <dbReference type="ChEBI" id="CHEBI:29105"/>
    </cofactor>
    <text evidence="2">Binds 1 zinc ion per subunit.</text>
</comment>
<comment type="subunit">
    <text evidence="2">Monomer.</text>
</comment>
<comment type="similarity">
    <text evidence="2">Belongs to the FPG family.</text>
</comment>
<keyword id="KW-0227">DNA damage</keyword>
<keyword id="KW-0234">DNA repair</keyword>
<keyword id="KW-0238">DNA-binding</keyword>
<keyword id="KW-0326">Glycosidase</keyword>
<keyword id="KW-0378">Hydrolase</keyword>
<keyword id="KW-0456">Lyase</keyword>
<keyword id="KW-0479">Metal-binding</keyword>
<keyword id="KW-0511">Multifunctional enzyme</keyword>
<keyword id="KW-1185">Reference proteome</keyword>
<keyword id="KW-0862">Zinc</keyword>
<keyword id="KW-0863">Zinc-finger</keyword>
<reference key="1">
    <citation type="journal article" date="2007" name="J. Bacteriol.">
        <title>The complete genome sequence of Roseobacter denitrificans reveals a mixotrophic rather than photosynthetic metabolism.</title>
        <authorList>
            <person name="Swingley W.D."/>
            <person name="Sadekar S."/>
            <person name="Mastrian S.D."/>
            <person name="Matthies H.J."/>
            <person name="Hao J."/>
            <person name="Ramos H."/>
            <person name="Acharya C.R."/>
            <person name="Conrad A.L."/>
            <person name="Taylor H.L."/>
            <person name="Dejesa L.C."/>
            <person name="Shah M.K."/>
            <person name="O'Huallachain M.E."/>
            <person name="Lince M.T."/>
            <person name="Blankenship R.E."/>
            <person name="Beatty J.T."/>
            <person name="Touchman J.W."/>
        </authorList>
    </citation>
    <scope>NUCLEOTIDE SEQUENCE [LARGE SCALE GENOMIC DNA]</scope>
    <source>
        <strain>ATCC 33942 / OCh 114</strain>
    </source>
</reference>
<feature type="initiator methionine" description="Removed" evidence="1">
    <location>
        <position position="1"/>
    </location>
</feature>
<feature type="chain" id="PRO_1000008764" description="Formamidopyrimidine-DNA glycosylase">
    <location>
        <begin position="2"/>
        <end position="283"/>
    </location>
</feature>
<feature type="zinc finger region" description="FPG-type" evidence="2">
    <location>
        <begin position="247"/>
        <end position="283"/>
    </location>
</feature>
<feature type="active site" description="Schiff-base intermediate with DNA" evidence="2">
    <location>
        <position position="2"/>
    </location>
</feature>
<feature type="active site" description="Proton donor" evidence="2">
    <location>
        <position position="3"/>
    </location>
</feature>
<feature type="active site" description="Proton donor; for beta-elimination activity" evidence="2">
    <location>
        <position position="58"/>
    </location>
</feature>
<feature type="active site" description="Proton donor; for delta-elimination activity" evidence="2">
    <location>
        <position position="273"/>
    </location>
</feature>
<feature type="binding site" evidence="2">
    <location>
        <position position="100"/>
    </location>
    <ligand>
        <name>DNA</name>
        <dbReference type="ChEBI" id="CHEBI:16991"/>
    </ligand>
</feature>
<feature type="binding site" evidence="2">
    <location>
        <position position="119"/>
    </location>
    <ligand>
        <name>DNA</name>
        <dbReference type="ChEBI" id="CHEBI:16991"/>
    </ligand>
</feature>
<feature type="binding site" evidence="2">
    <location>
        <position position="162"/>
    </location>
    <ligand>
        <name>DNA</name>
        <dbReference type="ChEBI" id="CHEBI:16991"/>
    </ligand>
</feature>
<evidence type="ECO:0000250" key="1"/>
<evidence type="ECO:0000255" key="2">
    <source>
        <dbReference type="HAMAP-Rule" id="MF_00103"/>
    </source>
</evidence>
<dbReference type="EC" id="3.2.2.23" evidence="2"/>
<dbReference type="EC" id="4.2.99.18" evidence="2"/>
<dbReference type="EMBL" id="CP000362">
    <property type="protein sequence ID" value="ABG29933.1"/>
    <property type="molecule type" value="Genomic_DNA"/>
</dbReference>
<dbReference type="RefSeq" id="WP_011566555.1">
    <property type="nucleotide sequence ID" value="NC_008209.1"/>
</dbReference>
<dbReference type="SMR" id="Q16DL0"/>
<dbReference type="STRING" id="375451.RD1_0204"/>
<dbReference type="KEGG" id="rde:RD1_0204"/>
<dbReference type="eggNOG" id="COG0266">
    <property type="taxonomic scope" value="Bacteria"/>
</dbReference>
<dbReference type="HOGENOM" id="CLU_038423_1_1_5"/>
<dbReference type="OrthoDB" id="9800855at2"/>
<dbReference type="Proteomes" id="UP000007029">
    <property type="component" value="Chromosome"/>
</dbReference>
<dbReference type="GO" id="GO:0034039">
    <property type="term" value="F:8-oxo-7,8-dihydroguanine DNA N-glycosylase activity"/>
    <property type="evidence" value="ECO:0007669"/>
    <property type="project" value="TreeGrafter"/>
</dbReference>
<dbReference type="GO" id="GO:0140078">
    <property type="term" value="F:class I DNA-(apurinic or apyrimidinic site) endonuclease activity"/>
    <property type="evidence" value="ECO:0007669"/>
    <property type="project" value="UniProtKB-EC"/>
</dbReference>
<dbReference type="GO" id="GO:0003684">
    <property type="term" value="F:damaged DNA binding"/>
    <property type="evidence" value="ECO:0007669"/>
    <property type="project" value="InterPro"/>
</dbReference>
<dbReference type="GO" id="GO:0008270">
    <property type="term" value="F:zinc ion binding"/>
    <property type="evidence" value="ECO:0007669"/>
    <property type="project" value="UniProtKB-UniRule"/>
</dbReference>
<dbReference type="GO" id="GO:0006284">
    <property type="term" value="P:base-excision repair"/>
    <property type="evidence" value="ECO:0007669"/>
    <property type="project" value="InterPro"/>
</dbReference>
<dbReference type="CDD" id="cd08966">
    <property type="entry name" value="EcFpg-like_N"/>
    <property type="match status" value="1"/>
</dbReference>
<dbReference type="FunFam" id="1.10.8.50:FF:000003">
    <property type="entry name" value="Formamidopyrimidine-DNA glycosylase"/>
    <property type="match status" value="1"/>
</dbReference>
<dbReference type="Gene3D" id="1.10.8.50">
    <property type="match status" value="1"/>
</dbReference>
<dbReference type="Gene3D" id="3.20.190.10">
    <property type="entry name" value="MutM-like, N-terminal"/>
    <property type="match status" value="1"/>
</dbReference>
<dbReference type="HAMAP" id="MF_00103">
    <property type="entry name" value="Fapy_DNA_glycosyl"/>
    <property type="match status" value="1"/>
</dbReference>
<dbReference type="InterPro" id="IPR015886">
    <property type="entry name" value="DNA_glyclase/AP_lyase_DNA-bd"/>
</dbReference>
<dbReference type="InterPro" id="IPR020629">
    <property type="entry name" value="Formamido-pyr_DNA_Glyclase"/>
</dbReference>
<dbReference type="InterPro" id="IPR012319">
    <property type="entry name" value="FPG_cat"/>
</dbReference>
<dbReference type="InterPro" id="IPR035937">
    <property type="entry name" value="MutM-like_N-ter"/>
</dbReference>
<dbReference type="InterPro" id="IPR010979">
    <property type="entry name" value="Ribosomal_uS13-like_H2TH"/>
</dbReference>
<dbReference type="InterPro" id="IPR000214">
    <property type="entry name" value="Znf_DNA_glyclase/AP_lyase"/>
</dbReference>
<dbReference type="NCBIfam" id="TIGR00577">
    <property type="entry name" value="fpg"/>
    <property type="match status" value="1"/>
</dbReference>
<dbReference type="NCBIfam" id="NF002211">
    <property type="entry name" value="PRK01103.1"/>
    <property type="match status" value="1"/>
</dbReference>
<dbReference type="PANTHER" id="PTHR22993">
    <property type="entry name" value="FORMAMIDOPYRIMIDINE-DNA GLYCOSYLASE"/>
    <property type="match status" value="1"/>
</dbReference>
<dbReference type="PANTHER" id="PTHR22993:SF9">
    <property type="entry name" value="FORMAMIDOPYRIMIDINE-DNA GLYCOSYLASE"/>
    <property type="match status" value="1"/>
</dbReference>
<dbReference type="Pfam" id="PF01149">
    <property type="entry name" value="Fapy_DNA_glyco"/>
    <property type="match status" value="1"/>
</dbReference>
<dbReference type="Pfam" id="PF06831">
    <property type="entry name" value="H2TH"/>
    <property type="match status" value="1"/>
</dbReference>
<dbReference type="SMART" id="SM00898">
    <property type="entry name" value="Fapy_DNA_glyco"/>
    <property type="match status" value="1"/>
</dbReference>
<dbReference type="SMART" id="SM01232">
    <property type="entry name" value="H2TH"/>
    <property type="match status" value="1"/>
</dbReference>
<dbReference type="SUPFAM" id="SSF57716">
    <property type="entry name" value="Glucocorticoid receptor-like (DNA-binding domain)"/>
    <property type="match status" value="1"/>
</dbReference>
<dbReference type="SUPFAM" id="SSF81624">
    <property type="entry name" value="N-terminal domain of MutM-like DNA repair proteins"/>
    <property type="match status" value="1"/>
</dbReference>
<dbReference type="SUPFAM" id="SSF46946">
    <property type="entry name" value="S13-like H2TH domain"/>
    <property type="match status" value="1"/>
</dbReference>
<dbReference type="PROSITE" id="PS51068">
    <property type="entry name" value="FPG_CAT"/>
    <property type="match status" value="1"/>
</dbReference>
<dbReference type="PROSITE" id="PS51066">
    <property type="entry name" value="ZF_FPG_2"/>
    <property type="match status" value="1"/>
</dbReference>
<organism>
    <name type="scientific">Roseobacter denitrificans (strain ATCC 33942 / OCh 114)</name>
    <name type="common">Erythrobacter sp. (strain OCh 114)</name>
    <name type="synonym">Roseobacter denitrificans</name>
    <dbReference type="NCBI Taxonomy" id="375451"/>
    <lineage>
        <taxon>Bacteria</taxon>
        <taxon>Pseudomonadati</taxon>
        <taxon>Pseudomonadota</taxon>
        <taxon>Alphaproteobacteria</taxon>
        <taxon>Rhodobacterales</taxon>
        <taxon>Roseobacteraceae</taxon>
        <taxon>Roseobacter</taxon>
    </lineage>
</organism>